<feature type="chain" id="PRO_1000045992" description="Ribosomal protein L11 methyltransferase">
    <location>
        <begin position="1"/>
        <end position="300"/>
    </location>
</feature>
<feature type="binding site" evidence="1">
    <location>
        <position position="152"/>
    </location>
    <ligand>
        <name>S-adenosyl-L-methionine</name>
        <dbReference type="ChEBI" id="CHEBI:59789"/>
    </ligand>
</feature>
<feature type="binding site" evidence="1">
    <location>
        <position position="173"/>
    </location>
    <ligand>
        <name>S-adenosyl-L-methionine</name>
        <dbReference type="ChEBI" id="CHEBI:59789"/>
    </ligand>
</feature>
<feature type="binding site" evidence="1">
    <location>
        <position position="195"/>
    </location>
    <ligand>
        <name>S-adenosyl-L-methionine</name>
        <dbReference type="ChEBI" id="CHEBI:59789"/>
    </ligand>
</feature>
<feature type="binding site" evidence="1">
    <location>
        <position position="234"/>
    </location>
    <ligand>
        <name>S-adenosyl-L-methionine</name>
        <dbReference type="ChEBI" id="CHEBI:59789"/>
    </ligand>
</feature>
<comment type="function">
    <text evidence="1">Methylates ribosomal protein L11.</text>
</comment>
<comment type="catalytic activity">
    <reaction evidence="1">
        <text>L-lysyl-[protein] + 3 S-adenosyl-L-methionine = N(6),N(6),N(6)-trimethyl-L-lysyl-[protein] + 3 S-adenosyl-L-homocysteine + 3 H(+)</text>
        <dbReference type="Rhea" id="RHEA:54192"/>
        <dbReference type="Rhea" id="RHEA-COMP:9752"/>
        <dbReference type="Rhea" id="RHEA-COMP:13826"/>
        <dbReference type="ChEBI" id="CHEBI:15378"/>
        <dbReference type="ChEBI" id="CHEBI:29969"/>
        <dbReference type="ChEBI" id="CHEBI:57856"/>
        <dbReference type="ChEBI" id="CHEBI:59789"/>
        <dbReference type="ChEBI" id="CHEBI:61961"/>
    </reaction>
</comment>
<comment type="subcellular location">
    <subcellularLocation>
        <location evidence="1">Cytoplasm</location>
    </subcellularLocation>
</comment>
<comment type="similarity">
    <text evidence="1">Belongs to the methyltransferase superfamily. PrmA family.</text>
</comment>
<sequence>MSYRELVVELAREHAEALSDALLELGALSVSVEDADADTPDEQPLFGEPGLVPDRTAWQRSRVIALLSPDHEPAVLLAAAVNDIGVTETPKFDVREVEEQDWVRLTQSQFEPIPIGERIWVVPSWHDAPDPDALILELDPGLAFGTGSHPTTRLCMEWLEQSVKPGQSVLDYGCGSGILAILARKCGANPVVGIDIDPQAVESARQNSERNHAEVTYGLPDACPAGEFDIVVANILSNPLKLMASMLASKVKPGGRIALSGVLARQADEVAAVYARYVDISVWREHEGWVCLAGTRRESH</sequence>
<reference key="1">
    <citation type="submission" date="2006-08" db="EMBL/GenBank/DDBJ databases">
        <title>Complete sequence of chromosome 1 of Burkholderia cepacia AMMD.</title>
        <authorList>
            <person name="Copeland A."/>
            <person name="Lucas S."/>
            <person name="Lapidus A."/>
            <person name="Barry K."/>
            <person name="Detter J.C."/>
            <person name="Glavina del Rio T."/>
            <person name="Hammon N."/>
            <person name="Israni S."/>
            <person name="Pitluck S."/>
            <person name="Bruce D."/>
            <person name="Chain P."/>
            <person name="Malfatti S."/>
            <person name="Shin M."/>
            <person name="Vergez L."/>
            <person name="Schmutz J."/>
            <person name="Larimer F."/>
            <person name="Land M."/>
            <person name="Hauser L."/>
            <person name="Kyrpides N."/>
            <person name="Kim E."/>
            <person name="Parke J."/>
            <person name="Coenye T."/>
            <person name="Konstantinidis K."/>
            <person name="Ramette A."/>
            <person name="Tiedje J."/>
            <person name="Richardson P."/>
        </authorList>
    </citation>
    <scope>NUCLEOTIDE SEQUENCE [LARGE SCALE GENOMIC DNA]</scope>
    <source>
        <strain>ATCC BAA-244 / DSM 16087 / CCUG 44356 / LMG 19182 / AMMD</strain>
    </source>
</reference>
<gene>
    <name evidence="1" type="primary">prmA</name>
    <name type="ordered locus">Bamb_0505</name>
</gene>
<accession>Q0BIF9</accession>
<name>PRMA_BURCM</name>
<protein>
    <recommendedName>
        <fullName evidence="1">Ribosomal protein L11 methyltransferase</fullName>
        <shortName evidence="1">L11 Mtase</shortName>
        <ecNumber evidence="1">2.1.1.-</ecNumber>
    </recommendedName>
</protein>
<proteinExistence type="inferred from homology"/>
<evidence type="ECO:0000255" key="1">
    <source>
        <dbReference type="HAMAP-Rule" id="MF_00735"/>
    </source>
</evidence>
<organism>
    <name type="scientific">Burkholderia ambifaria (strain ATCC BAA-244 / DSM 16087 / CCUG 44356 / LMG 19182 / AMMD)</name>
    <name type="common">Burkholderia cepacia (strain AMMD)</name>
    <dbReference type="NCBI Taxonomy" id="339670"/>
    <lineage>
        <taxon>Bacteria</taxon>
        <taxon>Pseudomonadati</taxon>
        <taxon>Pseudomonadota</taxon>
        <taxon>Betaproteobacteria</taxon>
        <taxon>Burkholderiales</taxon>
        <taxon>Burkholderiaceae</taxon>
        <taxon>Burkholderia</taxon>
        <taxon>Burkholderia cepacia complex</taxon>
    </lineage>
</organism>
<keyword id="KW-0963">Cytoplasm</keyword>
<keyword id="KW-0489">Methyltransferase</keyword>
<keyword id="KW-0949">S-adenosyl-L-methionine</keyword>
<keyword id="KW-0808">Transferase</keyword>
<dbReference type="EC" id="2.1.1.-" evidence="1"/>
<dbReference type="EMBL" id="CP000440">
    <property type="protein sequence ID" value="ABI86064.1"/>
    <property type="molecule type" value="Genomic_DNA"/>
</dbReference>
<dbReference type="RefSeq" id="WP_011655920.1">
    <property type="nucleotide sequence ID" value="NC_008390.1"/>
</dbReference>
<dbReference type="SMR" id="Q0BIF9"/>
<dbReference type="GeneID" id="93084079"/>
<dbReference type="KEGG" id="bam:Bamb_0505"/>
<dbReference type="PATRIC" id="fig|339670.21.peg.1100"/>
<dbReference type="eggNOG" id="COG2264">
    <property type="taxonomic scope" value="Bacteria"/>
</dbReference>
<dbReference type="Proteomes" id="UP000000662">
    <property type="component" value="Chromosome 1"/>
</dbReference>
<dbReference type="GO" id="GO:0005829">
    <property type="term" value="C:cytosol"/>
    <property type="evidence" value="ECO:0007669"/>
    <property type="project" value="TreeGrafter"/>
</dbReference>
<dbReference type="GO" id="GO:0016279">
    <property type="term" value="F:protein-lysine N-methyltransferase activity"/>
    <property type="evidence" value="ECO:0007669"/>
    <property type="project" value="TreeGrafter"/>
</dbReference>
<dbReference type="GO" id="GO:0032259">
    <property type="term" value="P:methylation"/>
    <property type="evidence" value="ECO:0007669"/>
    <property type="project" value="UniProtKB-KW"/>
</dbReference>
<dbReference type="CDD" id="cd02440">
    <property type="entry name" value="AdoMet_MTases"/>
    <property type="match status" value="1"/>
</dbReference>
<dbReference type="Gene3D" id="3.40.50.150">
    <property type="entry name" value="Vaccinia Virus protein VP39"/>
    <property type="match status" value="1"/>
</dbReference>
<dbReference type="HAMAP" id="MF_00735">
    <property type="entry name" value="Methyltr_PrmA"/>
    <property type="match status" value="1"/>
</dbReference>
<dbReference type="InterPro" id="IPR050078">
    <property type="entry name" value="Ribosomal_L11_MeTrfase_PrmA"/>
</dbReference>
<dbReference type="InterPro" id="IPR004498">
    <property type="entry name" value="Ribosomal_PrmA_MeTrfase"/>
</dbReference>
<dbReference type="InterPro" id="IPR029063">
    <property type="entry name" value="SAM-dependent_MTases_sf"/>
</dbReference>
<dbReference type="NCBIfam" id="TIGR00406">
    <property type="entry name" value="prmA"/>
    <property type="match status" value="1"/>
</dbReference>
<dbReference type="PANTHER" id="PTHR43648">
    <property type="entry name" value="ELECTRON TRANSFER FLAVOPROTEIN BETA SUBUNIT LYSINE METHYLTRANSFERASE"/>
    <property type="match status" value="1"/>
</dbReference>
<dbReference type="PANTHER" id="PTHR43648:SF1">
    <property type="entry name" value="ELECTRON TRANSFER FLAVOPROTEIN BETA SUBUNIT LYSINE METHYLTRANSFERASE"/>
    <property type="match status" value="1"/>
</dbReference>
<dbReference type="Pfam" id="PF06325">
    <property type="entry name" value="PrmA"/>
    <property type="match status" value="1"/>
</dbReference>
<dbReference type="PIRSF" id="PIRSF000401">
    <property type="entry name" value="RPL11_MTase"/>
    <property type="match status" value="1"/>
</dbReference>
<dbReference type="SUPFAM" id="SSF53335">
    <property type="entry name" value="S-adenosyl-L-methionine-dependent methyltransferases"/>
    <property type="match status" value="1"/>
</dbReference>